<keyword id="KW-1185">Reference proteome</keyword>
<keyword id="KW-0949">S-adenosyl-L-methionine</keyword>
<keyword id="KW-0808">Transferase</keyword>
<feature type="chain" id="PRO_0000314406" description="Carboxy-S-adenosyl-L-methionine synthase">
    <location>
        <begin position="1"/>
        <end position="267"/>
    </location>
</feature>
<feature type="region of interest" description="Disordered" evidence="2">
    <location>
        <begin position="1"/>
        <end position="25"/>
    </location>
</feature>
<feature type="compositionally biased region" description="Polar residues" evidence="2">
    <location>
        <begin position="1"/>
        <end position="11"/>
    </location>
</feature>
<feature type="compositionally biased region" description="Basic and acidic residues" evidence="2">
    <location>
        <begin position="12"/>
        <end position="24"/>
    </location>
</feature>
<feature type="binding site" evidence="1">
    <location>
        <position position="59"/>
    </location>
    <ligand>
        <name>S-adenosyl-L-methionine</name>
        <dbReference type="ChEBI" id="CHEBI:59789"/>
    </ligand>
</feature>
<feature type="binding site" evidence="1">
    <location>
        <begin position="84"/>
        <end position="86"/>
    </location>
    <ligand>
        <name>S-adenosyl-L-methionine</name>
        <dbReference type="ChEBI" id="CHEBI:59789"/>
    </ligand>
</feature>
<feature type="binding site" evidence="1">
    <location>
        <begin position="109"/>
        <end position="110"/>
    </location>
    <ligand>
        <name>S-adenosyl-L-methionine</name>
        <dbReference type="ChEBI" id="CHEBI:59789"/>
    </ligand>
</feature>
<feature type="binding site" evidence="1">
    <location>
        <begin position="137"/>
        <end position="138"/>
    </location>
    <ligand>
        <name>S-adenosyl-L-methionine</name>
        <dbReference type="ChEBI" id="CHEBI:59789"/>
    </ligand>
</feature>
<feature type="binding site" evidence="1">
    <location>
        <position position="152"/>
    </location>
    <ligand>
        <name>S-adenosyl-L-methionine</name>
        <dbReference type="ChEBI" id="CHEBI:59789"/>
    </ligand>
</feature>
<feature type="binding site" evidence="1">
    <location>
        <position position="219"/>
    </location>
    <ligand>
        <name>S-adenosyl-L-methionine</name>
        <dbReference type="ChEBI" id="CHEBI:59789"/>
    </ligand>
</feature>
<evidence type="ECO:0000255" key="1">
    <source>
        <dbReference type="HAMAP-Rule" id="MF_01589"/>
    </source>
</evidence>
<evidence type="ECO:0000256" key="2">
    <source>
        <dbReference type="SAM" id="MobiDB-lite"/>
    </source>
</evidence>
<proteinExistence type="inferred from homology"/>
<protein>
    <recommendedName>
        <fullName evidence="1">Carboxy-S-adenosyl-L-methionine synthase</fullName>
        <shortName evidence="1">Cx-SAM synthase</shortName>
        <ecNumber evidence="1">2.1.3.-</ecNumber>
    </recommendedName>
</protein>
<sequence>MPNRDTQSQNDTPRHSPEAAEPQRDSLFAAPIAKLGDWTFDEKVAEVFPDMIQRSVPGYSNIISMIGMLAERFVQPNSQIYDLGCSLGAATLSMRRNIKAEGCKIIAVDNSPAMVERCRRHIDAFRAETPVDVVEADILDIKLENASMVVLNFTLQFLEPANRQRLLNQVYQGLRPGGALVLSEKFSFADHNVGELLFNMHHDFKRANGYSELEISQKRSMLENVMLTDSVETHKNRLHQAGFEHAEVWFQCFNFGSLIALKAGEAQ</sequence>
<organism>
    <name type="scientific">Yersinia pestis</name>
    <dbReference type="NCBI Taxonomy" id="632"/>
    <lineage>
        <taxon>Bacteria</taxon>
        <taxon>Pseudomonadati</taxon>
        <taxon>Pseudomonadota</taxon>
        <taxon>Gammaproteobacteria</taxon>
        <taxon>Enterobacterales</taxon>
        <taxon>Yersiniaceae</taxon>
        <taxon>Yersinia</taxon>
    </lineage>
</organism>
<reference key="1">
    <citation type="journal article" date="2001" name="Nature">
        <title>Genome sequence of Yersinia pestis, the causative agent of plague.</title>
        <authorList>
            <person name="Parkhill J."/>
            <person name="Wren B.W."/>
            <person name="Thomson N.R."/>
            <person name="Titball R.W."/>
            <person name="Holden M.T.G."/>
            <person name="Prentice M.B."/>
            <person name="Sebaihia M."/>
            <person name="James K.D."/>
            <person name="Churcher C.M."/>
            <person name="Mungall K.L."/>
            <person name="Baker S."/>
            <person name="Basham D."/>
            <person name="Bentley S.D."/>
            <person name="Brooks K."/>
            <person name="Cerdeno-Tarraga A.-M."/>
            <person name="Chillingworth T."/>
            <person name="Cronin A."/>
            <person name="Davies R.M."/>
            <person name="Davis P."/>
            <person name="Dougan G."/>
            <person name="Feltwell T."/>
            <person name="Hamlin N."/>
            <person name="Holroyd S."/>
            <person name="Jagels K."/>
            <person name="Karlyshev A.V."/>
            <person name="Leather S."/>
            <person name="Moule S."/>
            <person name="Oyston P.C.F."/>
            <person name="Quail M.A."/>
            <person name="Rutherford K.M."/>
            <person name="Simmonds M."/>
            <person name="Skelton J."/>
            <person name="Stevens K."/>
            <person name="Whitehead S."/>
            <person name="Barrell B.G."/>
        </authorList>
    </citation>
    <scope>NUCLEOTIDE SEQUENCE [LARGE SCALE GENOMIC DNA]</scope>
    <source>
        <strain>CO-92 / Biovar Orientalis</strain>
    </source>
</reference>
<reference key="2">
    <citation type="journal article" date="2002" name="J. Bacteriol.">
        <title>Genome sequence of Yersinia pestis KIM.</title>
        <authorList>
            <person name="Deng W."/>
            <person name="Burland V."/>
            <person name="Plunkett G. III"/>
            <person name="Boutin A."/>
            <person name="Mayhew G.F."/>
            <person name="Liss P."/>
            <person name="Perna N.T."/>
            <person name="Rose D.J."/>
            <person name="Mau B."/>
            <person name="Zhou S."/>
            <person name="Schwartz D.C."/>
            <person name="Fetherston J.D."/>
            <person name="Lindler L.E."/>
            <person name="Brubaker R.R."/>
            <person name="Plano G.V."/>
            <person name="Straley S.C."/>
            <person name="McDonough K.A."/>
            <person name="Nilles M.L."/>
            <person name="Matson J.S."/>
            <person name="Blattner F.R."/>
            <person name="Perry R.D."/>
        </authorList>
    </citation>
    <scope>NUCLEOTIDE SEQUENCE [LARGE SCALE GENOMIC DNA]</scope>
    <source>
        <strain>KIM10+ / Biovar Mediaevalis</strain>
    </source>
</reference>
<reference key="3">
    <citation type="journal article" date="2004" name="DNA Res.">
        <title>Complete genome sequence of Yersinia pestis strain 91001, an isolate avirulent to humans.</title>
        <authorList>
            <person name="Song Y."/>
            <person name="Tong Z."/>
            <person name="Wang J."/>
            <person name="Wang L."/>
            <person name="Guo Z."/>
            <person name="Han Y."/>
            <person name="Zhang J."/>
            <person name="Pei D."/>
            <person name="Zhou D."/>
            <person name="Qin H."/>
            <person name="Pang X."/>
            <person name="Han Y."/>
            <person name="Zhai J."/>
            <person name="Li M."/>
            <person name="Cui B."/>
            <person name="Qi Z."/>
            <person name="Jin L."/>
            <person name="Dai R."/>
            <person name="Chen F."/>
            <person name="Li S."/>
            <person name="Ye C."/>
            <person name="Du Z."/>
            <person name="Lin W."/>
            <person name="Wang J."/>
            <person name="Yu J."/>
            <person name="Yang H."/>
            <person name="Wang J."/>
            <person name="Huang P."/>
            <person name="Yang R."/>
        </authorList>
    </citation>
    <scope>NUCLEOTIDE SEQUENCE [LARGE SCALE GENOMIC DNA]</scope>
    <source>
        <strain>91001 / Biovar Mediaevalis</strain>
    </source>
</reference>
<dbReference type="EC" id="2.1.3.-" evidence="1"/>
<dbReference type="EMBL" id="AL590842">
    <property type="protein sequence ID" value="CAL20685.1"/>
    <property type="molecule type" value="Genomic_DNA"/>
</dbReference>
<dbReference type="EMBL" id="AE009952">
    <property type="protein sequence ID" value="AAM85821.1"/>
    <property type="molecule type" value="Genomic_DNA"/>
</dbReference>
<dbReference type="EMBL" id="AE017042">
    <property type="protein sequence ID" value="AAS62111.1"/>
    <property type="molecule type" value="Genomic_DNA"/>
</dbReference>
<dbReference type="PIR" id="AB0250">
    <property type="entry name" value="AB0250"/>
</dbReference>
<dbReference type="RefSeq" id="WP_002211207.1">
    <property type="nucleotide sequence ID" value="NZ_WUCM01000075.1"/>
</dbReference>
<dbReference type="RefSeq" id="YP_002347032.1">
    <property type="nucleotide sequence ID" value="NC_003143.1"/>
</dbReference>
<dbReference type="SMR" id="Q7CIB7"/>
<dbReference type="STRING" id="214092.YPO2050"/>
<dbReference type="PaxDb" id="214092-YPO2050"/>
<dbReference type="DNASU" id="1147208"/>
<dbReference type="EnsemblBacteria" id="AAS62111">
    <property type="protein sequence ID" value="AAS62111"/>
    <property type="gene ID" value="YP_1893"/>
</dbReference>
<dbReference type="GeneID" id="57976611"/>
<dbReference type="KEGG" id="ype:YPO2050"/>
<dbReference type="KEGG" id="ypk:y2261"/>
<dbReference type="KEGG" id="ypm:YP_1893"/>
<dbReference type="PATRIC" id="fig|214092.21.peg.2436"/>
<dbReference type="eggNOG" id="COG2226">
    <property type="taxonomic scope" value="Bacteria"/>
</dbReference>
<dbReference type="HOGENOM" id="CLU_078475_0_0_6"/>
<dbReference type="OMA" id="QMIELYY"/>
<dbReference type="OrthoDB" id="9779941at2"/>
<dbReference type="Proteomes" id="UP000000815">
    <property type="component" value="Chromosome"/>
</dbReference>
<dbReference type="Proteomes" id="UP000001019">
    <property type="component" value="Chromosome"/>
</dbReference>
<dbReference type="Proteomes" id="UP000002490">
    <property type="component" value="Chromosome"/>
</dbReference>
<dbReference type="GO" id="GO:0016743">
    <property type="term" value="F:carboxyl- or carbamoyltransferase activity"/>
    <property type="evidence" value="ECO:0007669"/>
    <property type="project" value="UniProtKB-UniRule"/>
</dbReference>
<dbReference type="GO" id="GO:1904047">
    <property type="term" value="F:S-adenosyl-L-methionine binding"/>
    <property type="evidence" value="ECO:0007669"/>
    <property type="project" value="UniProtKB-UniRule"/>
</dbReference>
<dbReference type="GO" id="GO:0002098">
    <property type="term" value="P:tRNA wobble uridine modification"/>
    <property type="evidence" value="ECO:0007669"/>
    <property type="project" value="InterPro"/>
</dbReference>
<dbReference type="CDD" id="cd02440">
    <property type="entry name" value="AdoMet_MTases"/>
    <property type="match status" value="1"/>
</dbReference>
<dbReference type="Gene3D" id="3.40.50.150">
    <property type="entry name" value="Vaccinia Virus protein VP39"/>
    <property type="match status" value="1"/>
</dbReference>
<dbReference type="HAMAP" id="MF_01589">
    <property type="entry name" value="Cx_SAM_synthase"/>
    <property type="match status" value="1"/>
</dbReference>
<dbReference type="InterPro" id="IPR005271">
    <property type="entry name" value="CmoA"/>
</dbReference>
<dbReference type="InterPro" id="IPR041698">
    <property type="entry name" value="Methyltransf_25"/>
</dbReference>
<dbReference type="InterPro" id="IPR029063">
    <property type="entry name" value="SAM-dependent_MTases_sf"/>
</dbReference>
<dbReference type="NCBIfam" id="TIGR00740">
    <property type="entry name" value="carboxy-S-adenosyl-L-methionine synthase CmoA"/>
    <property type="match status" value="1"/>
</dbReference>
<dbReference type="NCBIfam" id="NF011995">
    <property type="entry name" value="PRK15451.1"/>
    <property type="match status" value="1"/>
</dbReference>
<dbReference type="PANTHER" id="PTHR43861:SF2">
    <property type="entry name" value="CARBOXY-S-ADENOSYL-L-METHIONINE SYNTHASE"/>
    <property type="match status" value="1"/>
</dbReference>
<dbReference type="PANTHER" id="PTHR43861">
    <property type="entry name" value="TRANS-ACONITATE 2-METHYLTRANSFERASE-RELATED"/>
    <property type="match status" value="1"/>
</dbReference>
<dbReference type="Pfam" id="PF13649">
    <property type="entry name" value="Methyltransf_25"/>
    <property type="match status" value="1"/>
</dbReference>
<dbReference type="PIRSF" id="PIRSF006325">
    <property type="entry name" value="MeTrfase_bac"/>
    <property type="match status" value="1"/>
</dbReference>
<dbReference type="SUPFAM" id="SSF53335">
    <property type="entry name" value="S-adenosyl-L-methionine-dependent methyltransferases"/>
    <property type="match status" value="1"/>
</dbReference>
<gene>
    <name evidence="1" type="primary">cmoA</name>
    <name type="ordered locus">YPO2050</name>
    <name type="ordered locus">y2261</name>
    <name type="ordered locus">YP_1893</name>
</gene>
<comment type="function">
    <text evidence="1">Catalyzes the conversion of S-adenosyl-L-methionine (SAM) to carboxy-S-adenosyl-L-methionine (Cx-SAM).</text>
</comment>
<comment type="catalytic activity">
    <reaction evidence="1">
        <text>prephenate + S-adenosyl-L-methionine = carboxy-S-adenosyl-L-methionine + 3-phenylpyruvate + H2O</text>
        <dbReference type="Rhea" id="RHEA:51692"/>
        <dbReference type="ChEBI" id="CHEBI:15377"/>
        <dbReference type="ChEBI" id="CHEBI:18005"/>
        <dbReference type="ChEBI" id="CHEBI:29934"/>
        <dbReference type="ChEBI" id="CHEBI:59789"/>
        <dbReference type="ChEBI" id="CHEBI:134278"/>
    </reaction>
</comment>
<comment type="subunit">
    <text evidence="1">Homodimer.</text>
</comment>
<comment type="similarity">
    <text evidence="1">Belongs to the class I-like SAM-binding methyltransferase superfamily. Cx-SAM synthase family.</text>
</comment>
<accession>Q7CIB7</accession>
<accession>Q74U52</accession>
<name>CMOA_YERPE</name>